<feature type="chain" id="PRO_0000265043" description="Putative 3-methyladenine DNA glycosylase">
    <location>
        <begin position="1"/>
        <end position="196"/>
    </location>
</feature>
<comment type="similarity">
    <text evidence="1">Belongs to the DNA glycosylase MPG family.</text>
</comment>
<reference key="1">
    <citation type="submission" date="2005-08" db="EMBL/GenBank/DDBJ databases">
        <title>Complete sequence of Pelodictyon luteolum DSM 273.</title>
        <authorList>
            <consortium name="US DOE Joint Genome Institute"/>
            <person name="Copeland A."/>
            <person name="Lucas S."/>
            <person name="Lapidus A."/>
            <person name="Barry K."/>
            <person name="Detter J.C."/>
            <person name="Glavina T."/>
            <person name="Hammon N."/>
            <person name="Israni S."/>
            <person name="Pitluck S."/>
            <person name="Bryant D."/>
            <person name="Schmutz J."/>
            <person name="Larimer F."/>
            <person name="Land M."/>
            <person name="Kyrpides N."/>
            <person name="Ivanova N."/>
            <person name="Richardson P."/>
        </authorList>
    </citation>
    <scope>NUCLEOTIDE SEQUENCE [LARGE SCALE GENOMIC DNA]</scope>
    <source>
        <strain>DSM 273 / BCRC 81028 / 2530</strain>
    </source>
</reference>
<organism>
    <name type="scientific">Chlorobium luteolum (strain DSM 273 / BCRC 81028 / 2530)</name>
    <name type="common">Pelodictyon luteolum</name>
    <dbReference type="NCBI Taxonomy" id="319225"/>
    <lineage>
        <taxon>Bacteria</taxon>
        <taxon>Pseudomonadati</taxon>
        <taxon>Chlorobiota</taxon>
        <taxon>Chlorobiia</taxon>
        <taxon>Chlorobiales</taxon>
        <taxon>Chlorobiaceae</taxon>
        <taxon>Chlorobium/Pelodictyon group</taxon>
        <taxon>Pelodictyon</taxon>
    </lineage>
</organism>
<accession>Q3B622</accession>
<keyword id="KW-0227">DNA damage</keyword>
<keyword id="KW-0234">DNA repair</keyword>
<keyword id="KW-0378">Hydrolase</keyword>
<keyword id="KW-1185">Reference proteome</keyword>
<proteinExistence type="inferred from homology"/>
<name>3MGH_CHLL3</name>
<sequence length="196" mass="21756">MTRLGKQFFTAPTLALTERLLGKIFVRITPSGTVLKGRIVETEAYLGHNDEACHAWRKKTERNRVMFEAPGTLYVYFSYGCHHLLNIVTEPEGTAGAVLIRAMEPVEGIPCMQERRQTTVETALMSGPAKLTSALGVERSSSGRDLFGNEFFLLDAPSPQPSMICTSTRVGISRSRELPWRKYLADSPHVSKGRPS</sequence>
<evidence type="ECO:0000255" key="1">
    <source>
        <dbReference type="HAMAP-Rule" id="MF_00527"/>
    </source>
</evidence>
<dbReference type="EC" id="3.2.2.-" evidence="1"/>
<dbReference type="EMBL" id="CP000096">
    <property type="protein sequence ID" value="ABB23209.1"/>
    <property type="molecule type" value="Genomic_DNA"/>
</dbReference>
<dbReference type="RefSeq" id="WP_011357084.1">
    <property type="nucleotide sequence ID" value="NC_007512.1"/>
</dbReference>
<dbReference type="SMR" id="Q3B622"/>
<dbReference type="STRING" id="319225.Plut_0321"/>
<dbReference type="KEGG" id="plt:Plut_0321"/>
<dbReference type="eggNOG" id="COG2094">
    <property type="taxonomic scope" value="Bacteria"/>
</dbReference>
<dbReference type="HOGENOM" id="CLU_060471_4_1_10"/>
<dbReference type="OrthoDB" id="9794313at2"/>
<dbReference type="Proteomes" id="UP000002709">
    <property type="component" value="Chromosome"/>
</dbReference>
<dbReference type="GO" id="GO:0003905">
    <property type="term" value="F:alkylbase DNA N-glycosylase activity"/>
    <property type="evidence" value="ECO:0007669"/>
    <property type="project" value="InterPro"/>
</dbReference>
<dbReference type="GO" id="GO:0003677">
    <property type="term" value="F:DNA binding"/>
    <property type="evidence" value="ECO:0007669"/>
    <property type="project" value="InterPro"/>
</dbReference>
<dbReference type="GO" id="GO:0006284">
    <property type="term" value="P:base-excision repair"/>
    <property type="evidence" value="ECO:0007669"/>
    <property type="project" value="InterPro"/>
</dbReference>
<dbReference type="CDD" id="cd00540">
    <property type="entry name" value="AAG"/>
    <property type="match status" value="1"/>
</dbReference>
<dbReference type="FunFam" id="3.10.300.10:FF:000001">
    <property type="entry name" value="Putative 3-methyladenine DNA glycosylase"/>
    <property type="match status" value="1"/>
</dbReference>
<dbReference type="Gene3D" id="3.10.300.10">
    <property type="entry name" value="Methylpurine-DNA glycosylase (MPG)"/>
    <property type="match status" value="1"/>
</dbReference>
<dbReference type="HAMAP" id="MF_00527">
    <property type="entry name" value="3MGH"/>
    <property type="match status" value="1"/>
</dbReference>
<dbReference type="InterPro" id="IPR011034">
    <property type="entry name" value="Formyl_transferase-like_C_sf"/>
</dbReference>
<dbReference type="InterPro" id="IPR003180">
    <property type="entry name" value="MPG"/>
</dbReference>
<dbReference type="InterPro" id="IPR036995">
    <property type="entry name" value="MPG_sf"/>
</dbReference>
<dbReference type="NCBIfam" id="TIGR00567">
    <property type="entry name" value="3mg"/>
    <property type="match status" value="1"/>
</dbReference>
<dbReference type="NCBIfam" id="NF002003">
    <property type="entry name" value="PRK00802.1-3"/>
    <property type="match status" value="1"/>
</dbReference>
<dbReference type="PANTHER" id="PTHR10429">
    <property type="entry name" value="DNA-3-METHYLADENINE GLYCOSYLASE"/>
    <property type="match status" value="1"/>
</dbReference>
<dbReference type="PANTHER" id="PTHR10429:SF0">
    <property type="entry name" value="DNA-3-METHYLADENINE GLYCOSYLASE"/>
    <property type="match status" value="1"/>
</dbReference>
<dbReference type="Pfam" id="PF02245">
    <property type="entry name" value="Pur_DNA_glyco"/>
    <property type="match status" value="1"/>
</dbReference>
<dbReference type="SUPFAM" id="SSF50486">
    <property type="entry name" value="FMT C-terminal domain-like"/>
    <property type="match status" value="1"/>
</dbReference>
<protein>
    <recommendedName>
        <fullName evidence="1">Putative 3-methyladenine DNA glycosylase</fullName>
        <ecNumber evidence="1">3.2.2.-</ecNumber>
    </recommendedName>
</protein>
<gene>
    <name type="ordered locus">Plut_0321</name>
</gene>